<protein>
    <recommendedName>
        <fullName evidence="4">Protein CONSERVED ONLY IN THE GREEN LINEAGE 160, chloroplastic</fullName>
        <shortName evidence="4">AtCGL160</shortName>
    </recommendedName>
</protein>
<accession>O82279</accession>
<accession>A0A097PRF7</accession>
<accession>Q8LB58</accession>
<organism>
    <name type="scientific">Arabidopsis thaliana</name>
    <name type="common">Mouse-ear cress</name>
    <dbReference type="NCBI Taxonomy" id="3702"/>
    <lineage>
        <taxon>Eukaryota</taxon>
        <taxon>Viridiplantae</taxon>
        <taxon>Streptophyta</taxon>
        <taxon>Embryophyta</taxon>
        <taxon>Tracheophyta</taxon>
        <taxon>Spermatophyta</taxon>
        <taxon>Magnoliopsida</taxon>
        <taxon>eudicotyledons</taxon>
        <taxon>Gunneridae</taxon>
        <taxon>Pentapetalae</taxon>
        <taxon>rosids</taxon>
        <taxon>malvids</taxon>
        <taxon>Brassicales</taxon>
        <taxon>Brassicaceae</taxon>
        <taxon>Camelineae</taxon>
        <taxon>Arabidopsis</taxon>
    </lineage>
</organism>
<gene>
    <name evidence="4" type="primary">CGL160</name>
    <name evidence="6" type="ordered locus">At2g31040</name>
</gene>
<evidence type="ECO:0000255" key="1"/>
<evidence type="ECO:0000256" key="2">
    <source>
        <dbReference type="SAM" id="MobiDB-lite"/>
    </source>
</evidence>
<evidence type="ECO:0000269" key="3">
    <source>
    </source>
</evidence>
<evidence type="ECO:0000303" key="4">
    <source>
    </source>
</evidence>
<evidence type="ECO:0000305" key="5"/>
<evidence type="ECO:0000312" key="6">
    <source>
        <dbReference type="Araport" id="AT2G31040"/>
    </source>
</evidence>
<evidence type="ECO:0007744" key="7">
    <source>
    </source>
</evidence>
<dbReference type="EMBL" id="AC004669">
    <property type="protein sequence ID" value="AAM14978.1"/>
    <property type="molecule type" value="Genomic_DNA"/>
</dbReference>
<dbReference type="EMBL" id="AC005311">
    <property type="protein sequence ID" value="AAC63842.1"/>
    <property type="molecule type" value="Genomic_DNA"/>
</dbReference>
<dbReference type="EMBL" id="CP002685">
    <property type="protein sequence ID" value="AEC08482.1"/>
    <property type="molecule type" value="Genomic_DNA"/>
</dbReference>
<dbReference type="EMBL" id="AY050461">
    <property type="protein sequence ID" value="AAK91474.1"/>
    <property type="molecule type" value="mRNA"/>
</dbReference>
<dbReference type="EMBL" id="AY090339">
    <property type="protein sequence ID" value="AAL91000.1"/>
    <property type="molecule type" value="mRNA"/>
</dbReference>
<dbReference type="EMBL" id="AY087411">
    <property type="protein sequence ID" value="AAM64960.1"/>
    <property type="molecule type" value="mRNA"/>
</dbReference>
<dbReference type="EMBL" id="KM399984">
    <property type="protein sequence ID" value="AIU50617.1"/>
    <property type="status" value="ALT_SEQ"/>
    <property type="molecule type" value="mRNA"/>
</dbReference>
<dbReference type="PIR" id="G84715">
    <property type="entry name" value="G84715"/>
</dbReference>
<dbReference type="RefSeq" id="NP_565711.1">
    <property type="nucleotide sequence ID" value="NM_128659.4"/>
</dbReference>
<dbReference type="FunCoup" id="O82279">
    <property type="interactions" value="1352"/>
</dbReference>
<dbReference type="IntAct" id="O82279">
    <property type="interactions" value="4"/>
</dbReference>
<dbReference type="STRING" id="3702.O82279"/>
<dbReference type="iPTMnet" id="O82279"/>
<dbReference type="PaxDb" id="3702-AT2G31040.1"/>
<dbReference type="ProteomicsDB" id="241232"/>
<dbReference type="EnsemblPlants" id="AT2G31040.1">
    <property type="protein sequence ID" value="AT2G31040.1"/>
    <property type="gene ID" value="AT2G31040"/>
</dbReference>
<dbReference type="GeneID" id="817656"/>
<dbReference type="Gramene" id="AT2G31040.1">
    <property type="protein sequence ID" value="AT2G31040.1"/>
    <property type="gene ID" value="AT2G31040"/>
</dbReference>
<dbReference type="KEGG" id="ath:AT2G31040"/>
<dbReference type="Araport" id="AT2G31040"/>
<dbReference type="TAIR" id="AT2G31040">
    <property type="gene designation" value="CGL160"/>
</dbReference>
<dbReference type="eggNOG" id="ENOG502QVM8">
    <property type="taxonomic scope" value="Eukaryota"/>
</dbReference>
<dbReference type="HOGENOM" id="CLU_063775_0_0_1"/>
<dbReference type="InParanoid" id="O82279"/>
<dbReference type="OMA" id="YWGGDDE"/>
<dbReference type="PhylomeDB" id="O82279"/>
<dbReference type="PRO" id="PR:O82279"/>
<dbReference type="Proteomes" id="UP000006548">
    <property type="component" value="Chromosome 2"/>
</dbReference>
<dbReference type="ExpressionAtlas" id="O82279">
    <property type="expression patterns" value="baseline and differential"/>
</dbReference>
<dbReference type="GO" id="GO:0009534">
    <property type="term" value="C:chloroplast thylakoid"/>
    <property type="evidence" value="ECO:0000314"/>
    <property type="project" value="TAIR"/>
</dbReference>
<dbReference type="GO" id="GO:0009535">
    <property type="term" value="C:chloroplast thylakoid membrane"/>
    <property type="evidence" value="ECO:0000314"/>
    <property type="project" value="UniProtKB"/>
</dbReference>
<dbReference type="GO" id="GO:0033614">
    <property type="term" value="P:chloroplast proton-transporting ATP synthase complex assembly"/>
    <property type="evidence" value="ECO:0000315"/>
    <property type="project" value="TAIR"/>
</dbReference>
<dbReference type="InterPro" id="IPR056309">
    <property type="entry name" value="CGL160/ATPI_dom"/>
</dbReference>
<dbReference type="PANTHER" id="PTHR34118">
    <property type="entry name" value="NF-KAPPA-B INHIBITOR-LIKE PROTEIN-RELATED"/>
    <property type="match status" value="1"/>
</dbReference>
<dbReference type="PANTHER" id="PTHR34118:SF6">
    <property type="entry name" value="PROTEIN CONSERVED ONLY IN THE GREEN LINEAGE 160, CHLOROPLASTIC"/>
    <property type="match status" value="1"/>
</dbReference>
<dbReference type="Pfam" id="PF24763">
    <property type="entry name" value="CGL160_C"/>
    <property type="match status" value="1"/>
</dbReference>
<reference key="1">
    <citation type="journal article" date="1999" name="Nature">
        <title>Sequence and analysis of chromosome 2 of the plant Arabidopsis thaliana.</title>
        <authorList>
            <person name="Lin X."/>
            <person name="Kaul S."/>
            <person name="Rounsley S.D."/>
            <person name="Shea T.P."/>
            <person name="Benito M.-I."/>
            <person name="Town C.D."/>
            <person name="Fujii C.Y."/>
            <person name="Mason T.M."/>
            <person name="Bowman C.L."/>
            <person name="Barnstead M.E."/>
            <person name="Feldblyum T.V."/>
            <person name="Buell C.R."/>
            <person name="Ketchum K.A."/>
            <person name="Lee J.J."/>
            <person name="Ronning C.M."/>
            <person name="Koo H.L."/>
            <person name="Moffat K.S."/>
            <person name="Cronin L.A."/>
            <person name="Shen M."/>
            <person name="Pai G."/>
            <person name="Van Aken S."/>
            <person name="Umayam L."/>
            <person name="Tallon L.J."/>
            <person name="Gill J.E."/>
            <person name="Adams M.D."/>
            <person name="Carrera A.J."/>
            <person name="Creasy T.H."/>
            <person name="Goodman H.M."/>
            <person name="Somerville C.R."/>
            <person name="Copenhaver G.P."/>
            <person name="Preuss D."/>
            <person name="Nierman W.C."/>
            <person name="White O."/>
            <person name="Eisen J.A."/>
            <person name="Salzberg S.L."/>
            <person name="Fraser C.M."/>
            <person name="Venter J.C."/>
        </authorList>
    </citation>
    <scope>NUCLEOTIDE SEQUENCE [LARGE SCALE GENOMIC DNA]</scope>
    <source>
        <strain>cv. Columbia</strain>
    </source>
</reference>
<reference key="2">
    <citation type="journal article" date="2017" name="Plant J.">
        <title>Araport11: a complete reannotation of the Arabidopsis thaliana reference genome.</title>
        <authorList>
            <person name="Cheng C.Y."/>
            <person name="Krishnakumar V."/>
            <person name="Chan A.P."/>
            <person name="Thibaud-Nissen F."/>
            <person name="Schobel S."/>
            <person name="Town C.D."/>
        </authorList>
    </citation>
    <scope>GENOME REANNOTATION</scope>
    <source>
        <strain>cv. Columbia</strain>
    </source>
</reference>
<reference key="3">
    <citation type="journal article" date="2003" name="Science">
        <title>Empirical analysis of transcriptional activity in the Arabidopsis genome.</title>
        <authorList>
            <person name="Yamada K."/>
            <person name="Lim J."/>
            <person name="Dale J.M."/>
            <person name="Chen H."/>
            <person name="Shinn P."/>
            <person name="Palm C.J."/>
            <person name="Southwick A.M."/>
            <person name="Wu H.C."/>
            <person name="Kim C.J."/>
            <person name="Nguyen M."/>
            <person name="Pham P.K."/>
            <person name="Cheuk R.F."/>
            <person name="Karlin-Newmann G."/>
            <person name="Liu S.X."/>
            <person name="Lam B."/>
            <person name="Sakano H."/>
            <person name="Wu T."/>
            <person name="Yu G."/>
            <person name="Miranda M."/>
            <person name="Quach H.L."/>
            <person name="Tripp M."/>
            <person name="Chang C.H."/>
            <person name="Lee J.M."/>
            <person name="Toriumi M.J."/>
            <person name="Chan M.M."/>
            <person name="Tang C.C."/>
            <person name="Onodera C.S."/>
            <person name="Deng J.M."/>
            <person name="Akiyama K."/>
            <person name="Ansari Y."/>
            <person name="Arakawa T."/>
            <person name="Banh J."/>
            <person name="Banno F."/>
            <person name="Bowser L."/>
            <person name="Brooks S.Y."/>
            <person name="Carninci P."/>
            <person name="Chao Q."/>
            <person name="Choy N."/>
            <person name="Enju A."/>
            <person name="Goldsmith A.D."/>
            <person name="Gurjal M."/>
            <person name="Hansen N.F."/>
            <person name="Hayashizaki Y."/>
            <person name="Johnson-Hopson C."/>
            <person name="Hsuan V.W."/>
            <person name="Iida K."/>
            <person name="Karnes M."/>
            <person name="Khan S."/>
            <person name="Koesema E."/>
            <person name="Ishida J."/>
            <person name="Jiang P.X."/>
            <person name="Jones T."/>
            <person name="Kawai J."/>
            <person name="Kamiya A."/>
            <person name="Meyers C."/>
            <person name="Nakajima M."/>
            <person name="Narusaka M."/>
            <person name="Seki M."/>
            <person name="Sakurai T."/>
            <person name="Satou M."/>
            <person name="Tamse R."/>
            <person name="Vaysberg M."/>
            <person name="Wallender E.K."/>
            <person name="Wong C."/>
            <person name="Yamamura Y."/>
            <person name="Yuan S."/>
            <person name="Shinozaki K."/>
            <person name="Davis R.W."/>
            <person name="Theologis A."/>
            <person name="Ecker J.R."/>
        </authorList>
    </citation>
    <scope>NUCLEOTIDE SEQUENCE [LARGE SCALE MRNA]</scope>
    <source>
        <strain>cv. Columbia</strain>
    </source>
</reference>
<reference key="4">
    <citation type="submission" date="2002-03" db="EMBL/GenBank/DDBJ databases">
        <title>Full-length cDNA from Arabidopsis thaliana.</title>
        <authorList>
            <person name="Brover V.V."/>
            <person name="Troukhan M.E."/>
            <person name="Alexandrov N.A."/>
            <person name="Lu Y.-P."/>
            <person name="Flavell R.B."/>
            <person name="Feldmann K.A."/>
        </authorList>
    </citation>
    <scope>NUCLEOTIDE SEQUENCE [LARGE SCALE MRNA]</scope>
</reference>
<reference key="5">
    <citation type="journal article" date="2014" name="Nat. Commun.">
        <title>Resolution of deep angiosperm phylogeny using conserved nuclear genes and estimates of early divergence times.</title>
        <authorList>
            <person name="Zeng L."/>
            <person name="Zhang Q."/>
            <person name="Sun R."/>
            <person name="Kong H."/>
            <person name="Zhang N."/>
            <person name="Ma H."/>
        </authorList>
    </citation>
    <scope>NUCLEOTIDE SEQUENCE [MRNA] OF 27-322</scope>
</reference>
<reference key="6">
    <citation type="journal article" date="2009" name="Plant Physiol.">
        <title>Large-scale Arabidopsis phosphoproteome profiling reveals novel chloroplast kinase substrates and phosphorylation networks.</title>
        <authorList>
            <person name="Reiland S."/>
            <person name="Messerli G."/>
            <person name="Baerenfaller K."/>
            <person name="Gerrits B."/>
            <person name="Endler A."/>
            <person name="Grossmann J."/>
            <person name="Gruissem W."/>
            <person name="Baginsky S."/>
        </authorList>
    </citation>
    <scope>PHOSPHORYLATION [LARGE SCALE ANALYSIS] AT SER-117</scope>
    <scope>IDENTIFICATION BY MASS SPECTROMETRY [LARGE SCALE ANALYSIS]</scope>
</reference>
<reference key="7">
    <citation type="journal article" date="2014" name="Plant Physiol.">
        <title>The Arabidopsis protein CONSERVED ONLY IN THE GREEN LINEAGE160 promotes the assembly of the membranous part of the chloroplast ATP synthase.</title>
        <authorList>
            <person name="Ruehle T."/>
            <person name="Razeghi J.A."/>
            <person name="Vamvaka E."/>
            <person name="Viola S."/>
            <person name="Gandini C."/>
            <person name="Kleine T."/>
            <person name="Schuenemann D."/>
            <person name="Barbato R."/>
            <person name="Jahns P."/>
            <person name="Leister D."/>
        </authorList>
    </citation>
    <scope>FUNCTION</scope>
    <scope>SUBCELLULAR LOCATION</scope>
    <scope>DISRUPTION PHENOTYPE</scope>
</reference>
<feature type="transit peptide" description="Chloroplast" evidence="1">
    <location>
        <begin position="1"/>
        <end position="46"/>
    </location>
</feature>
<feature type="chain" id="PRO_0000443950" description="Protein CONSERVED ONLY IN THE GREEN LINEAGE 160, chloroplastic">
    <location>
        <begin position="47"/>
        <end position="350"/>
    </location>
</feature>
<feature type="transmembrane region" description="Helical" evidence="1">
    <location>
        <begin position="213"/>
        <end position="233"/>
    </location>
</feature>
<feature type="transmembrane region" description="Helical" evidence="1">
    <location>
        <begin position="239"/>
        <end position="259"/>
    </location>
</feature>
<feature type="transmembrane region" description="Helical" evidence="1">
    <location>
        <begin position="276"/>
        <end position="296"/>
    </location>
</feature>
<feature type="transmembrane region" description="Helical" evidence="1">
    <location>
        <begin position="304"/>
        <end position="324"/>
    </location>
</feature>
<feature type="region of interest" description="Disordered" evidence="2">
    <location>
        <begin position="7"/>
        <end position="58"/>
    </location>
</feature>
<feature type="compositionally biased region" description="Polar residues" evidence="2">
    <location>
        <begin position="7"/>
        <end position="26"/>
    </location>
</feature>
<feature type="modified residue" description="Phosphoserine" evidence="7">
    <location>
        <position position="117"/>
    </location>
</feature>
<feature type="sequence conflict" description="In Ref. 4; AAM64960." evidence="5" ref="4">
    <original>K</original>
    <variation>E</variation>
    <location>
        <position position="105"/>
    </location>
</feature>
<keyword id="KW-0150">Chloroplast</keyword>
<keyword id="KW-0472">Membrane</keyword>
<keyword id="KW-0597">Phosphoprotein</keyword>
<keyword id="KW-0934">Plastid</keyword>
<keyword id="KW-1185">Reference proteome</keyword>
<keyword id="KW-0793">Thylakoid</keyword>
<keyword id="KW-0809">Transit peptide</keyword>
<keyword id="KW-0812">Transmembrane</keyword>
<keyword id="KW-1133">Transmembrane helix</keyword>
<sequence>MAILSYISATSTTPPIPQDQSPNSRLPTKIILPNKKPEKWSTGVAPGEYGGPPTTTKLRKYWGGEKEDPITSTDLIWNRDFMDQMKKLFDDPNDSSLDPSPSKEKSSGFLSFSRVMSLDSMDVDLSKELASSSKSVVKNRLDTSKSEAKKQMSKAIVSPKWKLAPTRREQEKWDRATKAATGGSDVMFRELRRPRGDPEVQAAKDREQYFKLKNKIQVLTLGIGGVGLVSAYISYTPEIALSFGAGLLGSLAYMRMLGNSVDAMADGARGVAKGAANQPRLLVPVVLVMIFNRWNAILVPEYGFMHLELIPMLVGFFTYKIATFFQAIEEAISITTQKPESISPDTQASD</sequence>
<comment type="function">
    <text evidence="3">Facilitates the assembly of the membrane proton channel of the chloroplastic F-type ATPase. Specifically required for the efficient assembly and integration of the CF(0) subunit c into the chloroplastic ATPase complex in the thylakoid membrane.</text>
</comment>
<comment type="subcellular location">
    <subcellularLocation>
        <location evidence="3">Plastid</location>
        <location evidence="3">Chloroplast thylakoid membrane</location>
        <topology evidence="1">Multi-pass membrane protein</topology>
    </subcellularLocation>
</comment>
<comment type="disruption phenotype">
    <text evidence="3">Reduced growth rate. Increase in xanthophyll cycle activity and energy-dependent non-photochemical quenching.</text>
</comment>
<comment type="sequence caution" evidence="5">
    <conflict type="miscellaneous discrepancy">
        <sequence resource="EMBL-CDS" id="AIU50617"/>
    </conflict>
    <text>Sequencing errors.</text>
</comment>
<name>CG160_ARATH</name>
<proteinExistence type="evidence at protein level"/>